<feature type="chain" id="PRO_0000127454" description="T-cell acute lymphocytic leukemia protein 1">
    <location>
        <begin position="1"/>
        <end position="331"/>
    </location>
</feature>
<feature type="domain" description="bHLH" evidence="3">
    <location>
        <begin position="187"/>
        <end position="239"/>
    </location>
</feature>
<feature type="region of interest" description="Disordered" evidence="4">
    <location>
        <begin position="1"/>
        <end position="27"/>
    </location>
</feature>
<feature type="region of interest" description="Disordered" evidence="4">
    <location>
        <begin position="40"/>
        <end position="86"/>
    </location>
</feature>
<feature type="region of interest" description="Disordered" evidence="4">
    <location>
        <begin position="249"/>
        <end position="331"/>
    </location>
</feature>
<feature type="compositionally biased region" description="Basic and acidic residues" evidence="4">
    <location>
        <begin position="1"/>
        <end position="22"/>
    </location>
</feature>
<feature type="compositionally biased region" description="Gly residues" evidence="4">
    <location>
        <begin position="56"/>
        <end position="70"/>
    </location>
</feature>
<feature type="compositionally biased region" description="Basic and acidic residues" evidence="4">
    <location>
        <begin position="72"/>
        <end position="86"/>
    </location>
</feature>
<feature type="compositionally biased region" description="Gly residues" evidence="4">
    <location>
        <begin position="263"/>
        <end position="275"/>
    </location>
</feature>
<feature type="modified residue" description="Phosphoserine" evidence="9">
    <location>
        <position position="12"/>
    </location>
</feature>
<feature type="modified residue" description="Phosphoserine" evidence="8 9">
    <location>
        <position position="122"/>
    </location>
</feature>
<feature type="modified residue" description="Phosphoserine" evidence="2">
    <location>
        <position position="172"/>
    </location>
</feature>
<feature type="splice variant" id="VSP_002154" description="In isoform PP22-TAL1." evidence="7">
    <location>
        <begin position="1"/>
        <end position="175"/>
    </location>
</feature>
<feature type="splice variant" id="VSP_002153" description="In isoform PP39-TAL1." evidence="7">
    <location>
        <begin position="1"/>
        <end position="25"/>
    </location>
</feature>
<feature type="helix" evidence="10">
    <location>
        <begin position="184"/>
        <end position="211"/>
    </location>
</feature>
<feature type="helix" evidence="10">
    <location>
        <begin position="225"/>
        <end position="245"/>
    </location>
</feature>
<dbReference type="EMBL" id="M61108">
    <property type="protein sequence ID" value="AAA36600.1"/>
    <property type="molecule type" value="mRNA"/>
</dbReference>
<dbReference type="EMBL" id="M61103">
    <property type="status" value="NOT_ANNOTATED_CDS"/>
    <property type="molecule type" value="Genomic_DNA"/>
</dbReference>
<dbReference type="EMBL" id="M61104">
    <property type="status" value="NOT_ANNOTATED_CDS"/>
    <property type="molecule type" value="Genomic_DNA"/>
</dbReference>
<dbReference type="EMBL" id="M61105">
    <property type="status" value="NOT_ANNOTATED_CDS"/>
    <property type="molecule type" value="Genomic_DNA"/>
</dbReference>
<dbReference type="EMBL" id="M63572">
    <property type="status" value="NOT_ANNOTATED_CDS"/>
    <property type="molecule type" value="Genomic_DNA"/>
</dbReference>
<dbReference type="EMBL" id="M63589">
    <property type="protein sequence ID" value="AAA36599.1"/>
    <property type="molecule type" value="Genomic_DNA"/>
</dbReference>
<dbReference type="EMBL" id="M63576">
    <property type="protein sequence ID" value="AAA36599.1"/>
    <property type="status" value="JOINED"/>
    <property type="molecule type" value="Genomic_DNA"/>
</dbReference>
<dbReference type="EMBL" id="M63584">
    <property type="protein sequence ID" value="AAA36599.1"/>
    <property type="status" value="JOINED"/>
    <property type="molecule type" value="Genomic_DNA"/>
</dbReference>
<dbReference type="EMBL" id="AL135960">
    <property type="protein sequence ID" value="CAB72103.1"/>
    <property type="molecule type" value="Genomic_DNA"/>
</dbReference>
<dbReference type="EMBL" id="CH471059">
    <property type="protein sequence ID" value="EAX06875.1"/>
    <property type="molecule type" value="Genomic_DNA"/>
</dbReference>
<dbReference type="EMBL" id="CH471059">
    <property type="protein sequence ID" value="EAX06876.1"/>
    <property type="molecule type" value="Genomic_DNA"/>
</dbReference>
<dbReference type="EMBL" id="CH471059">
    <property type="protein sequence ID" value="EAX06877.1"/>
    <property type="molecule type" value="Genomic_DNA"/>
</dbReference>
<dbReference type="EMBL" id="X58621">
    <property type="protein sequence ID" value="CAA41476.1"/>
    <property type="status" value="ALT_SEQ"/>
    <property type="molecule type" value="Genomic_DNA"/>
</dbReference>
<dbReference type="EMBL" id="X58622">
    <property type="protein sequence ID" value="CAA41477.1"/>
    <property type="molecule type" value="Genomic_DNA"/>
</dbReference>
<dbReference type="EMBL" id="M29038">
    <property type="protein sequence ID" value="AAA36598.1"/>
    <property type="molecule type" value="mRNA"/>
</dbReference>
<dbReference type="EMBL" id="X51990">
    <property type="protein sequence ID" value="CAA36246.1"/>
    <property type="molecule type" value="mRNA"/>
</dbReference>
<dbReference type="CCDS" id="CCDS547.1">
    <molecule id="P17542-1"/>
</dbReference>
<dbReference type="PIR" id="A36358">
    <property type="entry name" value="A36358"/>
</dbReference>
<dbReference type="PIR" id="I38253">
    <property type="entry name" value="I38253"/>
</dbReference>
<dbReference type="RefSeq" id="NP_001274276.1">
    <molecule id="P17542-1"/>
    <property type="nucleotide sequence ID" value="NM_001287347.2"/>
</dbReference>
<dbReference type="RefSeq" id="NP_001277332.1">
    <molecule id="P17542-1"/>
    <property type="nucleotide sequence ID" value="NM_001290403.2"/>
</dbReference>
<dbReference type="RefSeq" id="NP_001277333.1">
    <molecule id="P17542-1"/>
    <property type="nucleotide sequence ID" value="NM_001290404.1"/>
</dbReference>
<dbReference type="RefSeq" id="NP_001277334.1">
    <molecule id="P17542-1"/>
    <property type="nucleotide sequence ID" value="NM_001290405.1"/>
</dbReference>
<dbReference type="RefSeq" id="NP_001277335.1">
    <property type="nucleotide sequence ID" value="NM_001290406.1"/>
</dbReference>
<dbReference type="RefSeq" id="NP_003180.1">
    <molecule id="P17542-1"/>
    <property type="nucleotide sequence ID" value="NM_003189.5"/>
</dbReference>
<dbReference type="RefSeq" id="XP_005271217.1">
    <property type="nucleotide sequence ID" value="XM_005271160.4"/>
</dbReference>
<dbReference type="RefSeq" id="XP_016857676.1">
    <property type="nucleotide sequence ID" value="XM_017002187.1"/>
</dbReference>
<dbReference type="RefSeq" id="XP_016857677.1">
    <property type="nucleotide sequence ID" value="XM_017002188.1"/>
</dbReference>
<dbReference type="RefSeq" id="XP_016857678.1">
    <property type="nucleotide sequence ID" value="XM_017002189.1"/>
</dbReference>
<dbReference type="RefSeq" id="XP_016857679.1">
    <property type="nucleotide sequence ID" value="XM_017002190.1"/>
</dbReference>
<dbReference type="RefSeq" id="XP_016857680.1">
    <molecule id="P17542-1"/>
    <property type="nucleotide sequence ID" value="XM_017002191.2"/>
</dbReference>
<dbReference type="RefSeq" id="XP_054194471.1">
    <molecule id="P17542-1"/>
    <property type="nucleotide sequence ID" value="XM_054338496.1"/>
</dbReference>
<dbReference type="PDB" id="2YPA">
    <property type="method" value="X-ray"/>
    <property type="resolution" value="2.80 A"/>
    <property type="chains" value="A=180-253"/>
</dbReference>
<dbReference type="PDB" id="2YPB">
    <property type="method" value="X-ray"/>
    <property type="resolution" value="2.87 A"/>
    <property type="chains" value="A=180-253"/>
</dbReference>
<dbReference type="PDBsum" id="2YPA"/>
<dbReference type="PDBsum" id="2YPB"/>
<dbReference type="SMR" id="P17542"/>
<dbReference type="BioGRID" id="112749">
    <property type="interactions" value="90"/>
</dbReference>
<dbReference type="CORUM" id="P17542"/>
<dbReference type="DIP" id="DIP-40640N"/>
<dbReference type="ELM" id="P17542"/>
<dbReference type="FunCoup" id="P17542">
    <property type="interactions" value="1080"/>
</dbReference>
<dbReference type="IntAct" id="P17542">
    <property type="interactions" value="71"/>
</dbReference>
<dbReference type="MINT" id="P17542"/>
<dbReference type="STRING" id="9606.ENSP00000294339"/>
<dbReference type="iPTMnet" id="P17542"/>
<dbReference type="PhosphoSitePlus" id="P17542"/>
<dbReference type="BioMuta" id="TAL1"/>
<dbReference type="DMDM" id="134305"/>
<dbReference type="MassIVE" id="P17542"/>
<dbReference type="PaxDb" id="9606-ENSP00000294339"/>
<dbReference type="PeptideAtlas" id="P17542"/>
<dbReference type="ProteomicsDB" id="53484">
    <molecule id="P17542-1"/>
</dbReference>
<dbReference type="ProteomicsDB" id="53485">
    <molecule id="P17542-2"/>
</dbReference>
<dbReference type="ProteomicsDB" id="53486">
    <molecule id="P17542-3"/>
</dbReference>
<dbReference type="Pumba" id="P17542"/>
<dbReference type="Antibodypedia" id="4499">
    <property type="antibodies" value="791 antibodies from 39 providers"/>
</dbReference>
<dbReference type="DNASU" id="6886"/>
<dbReference type="Ensembl" id="ENST00000294339.3">
    <molecule id="P17542-1"/>
    <property type="protein sequence ID" value="ENSP00000294339.3"/>
    <property type="gene ID" value="ENSG00000162367.12"/>
</dbReference>
<dbReference type="Ensembl" id="ENST00000371884.6">
    <molecule id="P17542-1"/>
    <property type="protein sequence ID" value="ENSP00000360951.1"/>
    <property type="gene ID" value="ENSG00000162367.12"/>
</dbReference>
<dbReference type="Ensembl" id="ENST00000691006.1">
    <molecule id="P17542-1"/>
    <property type="protein sequence ID" value="ENSP00000510655.1"/>
    <property type="gene ID" value="ENSG00000162367.12"/>
</dbReference>
<dbReference type="GeneID" id="6886"/>
<dbReference type="KEGG" id="hsa:6886"/>
<dbReference type="MANE-Select" id="ENST00000691006.1">
    <property type="protein sequence ID" value="ENSP00000510655.1"/>
    <property type="RefSeq nucleotide sequence ID" value="NM_001290403.2"/>
    <property type="RefSeq protein sequence ID" value="NP_001277332.1"/>
</dbReference>
<dbReference type="UCSC" id="uc001cqx.4">
    <molecule id="P17542-1"/>
    <property type="organism name" value="human"/>
</dbReference>
<dbReference type="AGR" id="HGNC:11556"/>
<dbReference type="CTD" id="6886"/>
<dbReference type="DisGeNET" id="6886"/>
<dbReference type="GeneCards" id="TAL1"/>
<dbReference type="HGNC" id="HGNC:11556">
    <property type="gene designation" value="TAL1"/>
</dbReference>
<dbReference type="HPA" id="ENSG00000162367">
    <property type="expression patterns" value="Tissue enhanced (bone)"/>
</dbReference>
<dbReference type="MalaCards" id="TAL1"/>
<dbReference type="MIM" id="187040">
    <property type="type" value="gene"/>
</dbReference>
<dbReference type="neXtProt" id="NX_P17542"/>
<dbReference type="OpenTargets" id="ENSG00000162367"/>
<dbReference type="Orphanet" id="99861">
    <property type="disease" value="Precursor T-cell acute lymphoblastic leukemia"/>
</dbReference>
<dbReference type="PharmGKB" id="PA36326"/>
<dbReference type="VEuPathDB" id="HostDB:ENSG00000162367"/>
<dbReference type="eggNOG" id="KOG4029">
    <property type="taxonomic scope" value="Eukaryota"/>
</dbReference>
<dbReference type="GeneTree" id="ENSGT00940000159889"/>
<dbReference type="HOGENOM" id="CLU_059203_0_0_1"/>
<dbReference type="InParanoid" id="P17542"/>
<dbReference type="OMA" id="MMERQPA"/>
<dbReference type="OrthoDB" id="10069510at2759"/>
<dbReference type="PAN-GO" id="P17542">
    <property type="GO annotations" value="3 GO annotations based on evolutionary models"/>
</dbReference>
<dbReference type="PhylomeDB" id="P17542"/>
<dbReference type="TreeFam" id="TF315153"/>
<dbReference type="PathwayCommons" id="P17542"/>
<dbReference type="Reactome" id="R-HSA-8939236">
    <property type="pathway name" value="RUNX1 regulates transcription of genes involved in differentiation of HSCs"/>
</dbReference>
<dbReference type="Reactome" id="R-HSA-9616222">
    <property type="pathway name" value="Transcriptional regulation of granulopoiesis"/>
</dbReference>
<dbReference type="SignaLink" id="P17542"/>
<dbReference type="SIGNOR" id="P17542"/>
<dbReference type="BioGRID-ORCS" id="6886">
    <property type="hits" value="24 hits in 1179 CRISPR screens"/>
</dbReference>
<dbReference type="ChiTaRS" id="TAL1">
    <property type="organism name" value="human"/>
</dbReference>
<dbReference type="EvolutionaryTrace" id="P17542"/>
<dbReference type="GeneWiki" id="TAL1"/>
<dbReference type="GenomeRNAi" id="6886"/>
<dbReference type="Pharos" id="P17542">
    <property type="development level" value="Tbio"/>
</dbReference>
<dbReference type="PRO" id="PR:P17542"/>
<dbReference type="Proteomes" id="UP000005640">
    <property type="component" value="Chromosome 1"/>
</dbReference>
<dbReference type="RNAct" id="P17542">
    <property type="molecule type" value="protein"/>
</dbReference>
<dbReference type="Bgee" id="ENSG00000162367">
    <property type="expression patterns" value="Expressed in trabecular bone tissue and 128 other cell types or tissues"/>
</dbReference>
<dbReference type="GO" id="GO:0000785">
    <property type="term" value="C:chromatin"/>
    <property type="evidence" value="ECO:0000314"/>
    <property type="project" value="BHF-UCL"/>
</dbReference>
<dbReference type="GO" id="GO:0005654">
    <property type="term" value="C:nucleoplasm"/>
    <property type="evidence" value="ECO:0000314"/>
    <property type="project" value="HPA"/>
</dbReference>
<dbReference type="GO" id="GO:0005634">
    <property type="term" value="C:nucleus"/>
    <property type="evidence" value="ECO:0000314"/>
    <property type="project" value="BHF-UCL"/>
</dbReference>
<dbReference type="GO" id="GO:0005667">
    <property type="term" value="C:transcription regulator complex"/>
    <property type="evidence" value="ECO:0000314"/>
    <property type="project" value="BHF-UCL"/>
</dbReference>
<dbReference type="GO" id="GO:0003682">
    <property type="term" value="F:chromatin binding"/>
    <property type="evidence" value="ECO:0000314"/>
    <property type="project" value="MGI"/>
</dbReference>
<dbReference type="GO" id="GO:0003700">
    <property type="term" value="F:DNA-binding transcription factor activity"/>
    <property type="evidence" value="ECO:0000314"/>
    <property type="project" value="BHF-UCL"/>
</dbReference>
<dbReference type="GO" id="GO:0000981">
    <property type="term" value="F:DNA-binding transcription factor activity, RNA polymerase II-specific"/>
    <property type="evidence" value="ECO:0000247"/>
    <property type="project" value="NTNU_SB"/>
</dbReference>
<dbReference type="GO" id="GO:0070888">
    <property type="term" value="F:E-box binding"/>
    <property type="evidence" value="ECO:0000314"/>
    <property type="project" value="BHF-UCL"/>
</dbReference>
<dbReference type="GO" id="GO:0019899">
    <property type="term" value="F:enzyme binding"/>
    <property type="evidence" value="ECO:0000353"/>
    <property type="project" value="BHF-UCL"/>
</dbReference>
<dbReference type="GO" id="GO:0042826">
    <property type="term" value="F:histone deacetylase binding"/>
    <property type="evidence" value="ECO:0000353"/>
    <property type="project" value="BHF-UCL"/>
</dbReference>
<dbReference type="GO" id="GO:0046983">
    <property type="term" value="F:protein dimerization activity"/>
    <property type="evidence" value="ECO:0007669"/>
    <property type="project" value="InterPro"/>
</dbReference>
<dbReference type="GO" id="GO:0000978">
    <property type="term" value="F:RNA polymerase II cis-regulatory region sequence-specific DNA binding"/>
    <property type="evidence" value="ECO:0000318"/>
    <property type="project" value="GO_Central"/>
</dbReference>
<dbReference type="GO" id="GO:0061629">
    <property type="term" value="F:RNA polymerase II-specific DNA-binding transcription factor binding"/>
    <property type="evidence" value="ECO:0000353"/>
    <property type="project" value="BHF-UCL"/>
</dbReference>
<dbReference type="GO" id="GO:0000976">
    <property type="term" value="F:transcription cis-regulatory region binding"/>
    <property type="evidence" value="ECO:0000250"/>
    <property type="project" value="BHF-UCL"/>
</dbReference>
<dbReference type="GO" id="GO:0001525">
    <property type="term" value="P:angiogenesis"/>
    <property type="evidence" value="ECO:0007669"/>
    <property type="project" value="Ensembl"/>
</dbReference>
<dbReference type="GO" id="GO:0060018">
    <property type="term" value="P:astrocyte fate commitment"/>
    <property type="evidence" value="ECO:0007669"/>
    <property type="project" value="Ensembl"/>
</dbReference>
<dbReference type="GO" id="GO:0030221">
    <property type="term" value="P:basophil differentiation"/>
    <property type="evidence" value="ECO:0000270"/>
    <property type="project" value="BHF-UCL"/>
</dbReference>
<dbReference type="GO" id="GO:0045165">
    <property type="term" value="P:cell fate commitment"/>
    <property type="evidence" value="ECO:0000250"/>
    <property type="project" value="BHF-UCL"/>
</dbReference>
<dbReference type="GO" id="GO:0060216">
    <property type="term" value="P:definitive hemopoiesis"/>
    <property type="evidence" value="ECO:0007669"/>
    <property type="project" value="Ensembl"/>
</dbReference>
<dbReference type="GO" id="GO:0035162">
    <property type="term" value="P:embryonic hemopoiesis"/>
    <property type="evidence" value="ECO:0000250"/>
    <property type="project" value="UniProtKB"/>
</dbReference>
<dbReference type="GO" id="GO:0030218">
    <property type="term" value="P:erythrocyte differentiation"/>
    <property type="evidence" value="ECO:0000315"/>
    <property type="project" value="BHF-UCL"/>
</dbReference>
<dbReference type="GO" id="GO:0043249">
    <property type="term" value="P:erythrocyte maturation"/>
    <property type="evidence" value="ECO:0007669"/>
    <property type="project" value="Ensembl"/>
</dbReference>
<dbReference type="GO" id="GO:0060217">
    <property type="term" value="P:hemangioblast cell differentiation"/>
    <property type="evidence" value="ECO:0007669"/>
    <property type="project" value="Ensembl"/>
</dbReference>
<dbReference type="GO" id="GO:0060218">
    <property type="term" value="P:hematopoietic stem cell differentiation"/>
    <property type="evidence" value="ECO:0007669"/>
    <property type="project" value="Ensembl"/>
</dbReference>
<dbReference type="GO" id="GO:0030097">
    <property type="term" value="P:hemopoiesis"/>
    <property type="evidence" value="ECO:0000250"/>
    <property type="project" value="BHF-UCL"/>
</dbReference>
<dbReference type="GO" id="GO:0007626">
    <property type="term" value="P:locomotory behavior"/>
    <property type="evidence" value="ECO:0007669"/>
    <property type="project" value="Ensembl"/>
</dbReference>
<dbReference type="GO" id="GO:0035855">
    <property type="term" value="P:megakaryocyte development"/>
    <property type="evidence" value="ECO:0007669"/>
    <property type="project" value="Ensembl"/>
</dbReference>
<dbReference type="GO" id="GO:0030219">
    <property type="term" value="P:megakaryocyte differentiation"/>
    <property type="evidence" value="ECO:0000270"/>
    <property type="project" value="BHF-UCL"/>
</dbReference>
<dbReference type="GO" id="GO:0000122">
    <property type="term" value="P:negative regulation of transcription by RNA polymerase II"/>
    <property type="evidence" value="ECO:0007669"/>
    <property type="project" value="Ensembl"/>
</dbReference>
<dbReference type="GO" id="GO:0030220">
    <property type="term" value="P:platelet formation"/>
    <property type="evidence" value="ECO:0007669"/>
    <property type="project" value="Ensembl"/>
</dbReference>
<dbReference type="GO" id="GO:0051781">
    <property type="term" value="P:positive regulation of cell division"/>
    <property type="evidence" value="ECO:0000315"/>
    <property type="project" value="BHF-UCL"/>
</dbReference>
<dbReference type="GO" id="GO:1905269">
    <property type="term" value="P:positive regulation of chromatin organization"/>
    <property type="evidence" value="ECO:0000315"/>
    <property type="project" value="BHF-UCL"/>
</dbReference>
<dbReference type="GO" id="GO:0045893">
    <property type="term" value="P:positive regulation of DNA-templated transcription"/>
    <property type="evidence" value="ECO:0000314"/>
    <property type="project" value="UniProtKB"/>
</dbReference>
<dbReference type="GO" id="GO:0045648">
    <property type="term" value="P:positive regulation of erythrocyte differentiation"/>
    <property type="evidence" value="ECO:0000314"/>
    <property type="project" value="UniProtKB"/>
</dbReference>
<dbReference type="GO" id="GO:0045931">
    <property type="term" value="P:positive regulation of mitotic cell cycle"/>
    <property type="evidence" value="ECO:0000315"/>
    <property type="project" value="BHF-UCL"/>
</dbReference>
<dbReference type="GO" id="GO:0031334">
    <property type="term" value="P:positive regulation of protein-containing complex assembly"/>
    <property type="evidence" value="ECO:0000314"/>
    <property type="project" value="BHF-UCL"/>
</dbReference>
<dbReference type="GO" id="GO:0045944">
    <property type="term" value="P:positive regulation of transcription by RNA polymerase II"/>
    <property type="evidence" value="ECO:0000314"/>
    <property type="project" value="BHF-UCL"/>
</dbReference>
<dbReference type="GO" id="GO:0042127">
    <property type="term" value="P:regulation of cell population proliferation"/>
    <property type="evidence" value="ECO:0007669"/>
    <property type="project" value="Ensembl"/>
</dbReference>
<dbReference type="GO" id="GO:0060375">
    <property type="term" value="P:regulation of mast cell differentiation"/>
    <property type="evidence" value="ECO:0007669"/>
    <property type="project" value="Ensembl"/>
</dbReference>
<dbReference type="GO" id="GO:1904672">
    <property type="term" value="P:regulation of somatic stem cell population maintenance"/>
    <property type="evidence" value="ECO:0007669"/>
    <property type="project" value="Ensembl"/>
</dbReference>
<dbReference type="GO" id="GO:0006357">
    <property type="term" value="P:regulation of transcription by RNA polymerase II"/>
    <property type="evidence" value="ECO:0000250"/>
    <property type="project" value="BHF-UCL"/>
</dbReference>
<dbReference type="GO" id="GO:0021527">
    <property type="term" value="P:spinal cord association neuron differentiation"/>
    <property type="evidence" value="ECO:0007669"/>
    <property type="project" value="Ensembl"/>
</dbReference>
<dbReference type="GO" id="GO:0006366">
    <property type="term" value="P:transcription by RNA polymerase II"/>
    <property type="evidence" value="ECO:0007669"/>
    <property type="project" value="Ensembl"/>
</dbReference>
<dbReference type="CDD" id="cd19706">
    <property type="entry name" value="bHLH_TS_TAL1"/>
    <property type="match status" value="1"/>
</dbReference>
<dbReference type="FunFam" id="4.10.280.10:FF:000015">
    <property type="entry name" value="T-cell acute lymphocytic leukemia 1"/>
    <property type="match status" value="1"/>
</dbReference>
<dbReference type="Gene3D" id="4.10.280.10">
    <property type="entry name" value="Helix-loop-helix DNA-binding domain"/>
    <property type="match status" value="1"/>
</dbReference>
<dbReference type="IDEAL" id="IID00543"/>
<dbReference type="InterPro" id="IPR011598">
    <property type="entry name" value="bHLH_dom"/>
</dbReference>
<dbReference type="InterPro" id="IPR036638">
    <property type="entry name" value="HLH_DNA-bd_sf"/>
</dbReference>
<dbReference type="InterPro" id="IPR040238">
    <property type="entry name" value="TAL-like"/>
</dbReference>
<dbReference type="PANTHER" id="PTHR13864:SF16">
    <property type="entry name" value="T-CELL ACUTE LYMPHOCYTIC LEUKEMIA PROTEIN 1"/>
    <property type="match status" value="1"/>
</dbReference>
<dbReference type="PANTHER" id="PTHR13864">
    <property type="entry name" value="T-CELL ACUTE LYMPHOCYTIC LEUKEMIA/STEM CELL LEUKEMIA-RELATED"/>
    <property type="match status" value="1"/>
</dbReference>
<dbReference type="Pfam" id="PF00010">
    <property type="entry name" value="HLH"/>
    <property type="match status" value="1"/>
</dbReference>
<dbReference type="SMART" id="SM00353">
    <property type="entry name" value="HLH"/>
    <property type="match status" value="1"/>
</dbReference>
<dbReference type="SUPFAM" id="SSF47459">
    <property type="entry name" value="HLH, helix-loop-helix DNA-binding domain"/>
    <property type="match status" value="1"/>
</dbReference>
<dbReference type="PROSITE" id="PS50888">
    <property type="entry name" value="BHLH"/>
    <property type="match status" value="1"/>
</dbReference>
<reference key="1">
    <citation type="journal article" date="1990" name="Mol. Cell. Biol.">
        <title>The SCL gene is formed from a transcriptionally complex locus.</title>
        <authorList>
            <person name="Aplan P.D."/>
            <person name="Begley C.G."/>
            <person name="Bertness V."/>
            <person name="Nussmeier M."/>
            <person name="Ezquerra A."/>
            <person name="Coligan J."/>
            <person name="Kirsch I.R."/>
        </authorList>
    </citation>
    <scope>NUCLEOTIDE SEQUENCE [GENOMIC DNA / MRNA]</scope>
    <scope>ALTERNATIVE SPLICING</scope>
</reference>
<reference key="2">
    <citation type="journal article" date="2006" name="Nature">
        <title>The DNA sequence and biological annotation of human chromosome 1.</title>
        <authorList>
            <person name="Gregory S.G."/>
            <person name="Barlow K.F."/>
            <person name="McLay K.E."/>
            <person name="Kaul R."/>
            <person name="Swarbreck D."/>
            <person name="Dunham A."/>
            <person name="Scott C.E."/>
            <person name="Howe K.L."/>
            <person name="Woodfine K."/>
            <person name="Spencer C.C.A."/>
            <person name="Jones M.C."/>
            <person name="Gillson C."/>
            <person name="Searle S."/>
            <person name="Zhou Y."/>
            <person name="Kokocinski F."/>
            <person name="McDonald L."/>
            <person name="Evans R."/>
            <person name="Phillips K."/>
            <person name="Atkinson A."/>
            <person name="Cooper R."/>
            <person name="Jones C."/>
            <person name="Hall R.E."/>
            <person name="Andrews T.D."/>
            <person name="Lloyd C."/>
            <person name="Ainscough R."/>
            <person name="Almeida J.P."/>
            <person name="Ambrose K.D."/>
            <person name="Anderson F."/>
            <person name="Andrew R.W."/>
            <person name="Ashwell R.I.S."/>
            <person name="Aubin K."/>
            <person name="Babbage A.K."/>
            <person name="Bagguley C.L."/>
            <person name="Bailey J."/>
            <person name="Beasley H."/>
            <person name="Bethel G."/>
            <person name="Bird C.P."/>
            <person name="Bray-Allen S."/>
            <person name="Brown J.Y."/>
            <person name="Brown A.J."/>
            <person name="Buckley D."/>
            <person name="Burton J."/>
            <person name="Bye J."/>
            <person name="Carder C."/>
            <person name="Chapman J.C."/>
            <person name="Clark S.Y."/>
            <person name="Clarke G."/>
            <person name="Clee C."/>
            <person name="Cobley V."/>
            <person name="Collier R.E."/>
            <person name="Corby N."/>
            <person name="Coville G.J."/>
            <person name="Davies J."/>
            <person name="Deadman R."/>
            <person name="Dunn M."/>
            <person name="Earthrowl M."/>
            <person name="Ellington A.G."/>
            <person name="Errington H."/>
            <person name="Frankish A."/>
            <person name="Frankland J."/>
            <person name="French L."/>
            <person name="Garner P."/>
            <person name="Garnett J."/>
            <person name="Gay L."/>
            <person name="Ghori M.R.J."/>
            <person name="Gibson R."/>
            <person name="Gilby L.M."/>
            <person name="Gillett W."/>
            <person name="Glithero R.J."/>
            <person name="Grafham D.V."/>
            <person name="Griffiths C."/>
            <person name="Griffiths-Jones S."/>
            <person name="Grocock R."/>
            <person name="Hammond S."/>
            <person name="Harrison E.S.I."/>
            <person name="Hart E."/>
            <person name="Haugen E."/>
            <person name="Heath P.D."/>
            <person name="Holmes S."/>
            <person name="Holt K."/>
            <person name="Howden P.J."/>
            <person name="Hunt A.R."/>
            <person name="Hunt S.E."/>
            <person name="Hunter G."/>
            <person name="Isherwood J."/>
            <person name="James R."/>
            <person name="Johnson C."/>
            <person name="Johnson D."/>
            <person name="Joy A."/>
            <person name="Kay M."/>
            <person name="Kershaw J.K."/>
            <person name="Kibukawa M."/>
            <person name="Kimberley A.M."/>
            <person name="King A."/>
            <person name="Knights A.J."/>
            <person name="Lad H."/>
            <person name="Laird G."/>
            <person name="Lawlor S."/>
            <person name="Leongamornlert D.A."/>
            <person name="Lloyd D.M."/>
            <person name="Loveland J."/>
            <person name="Lovell J."/>
            <person name="Lush M.J."/>
            <person name="Lyne R."/>
            <person name="Martin S."/>
            <person name="Mashreghi-Mohammadi M."/>
            <person name="Matthews L."/>
            <person name="Matthews N.S.W."/>
            <person name="McLaren S."/>
            <person name="Milne S."/>
            <person name="Mistry S."/>
            <person name="Moore M.J.F."/>
            <person name="Nickerson T."/>
            <person name="O'Dell C.N."/>
            <person name="Oliver K."/>
            <person name="Palmeiri A."/>
            <person name="Palmer S.A."/>
            <person name="Parker A."/>
            <person name="Patel D."/>
            <person name="Pearce A.V."/>
            <person name="Peck A.I."/>
            <person name="Pelan S."/>
            <person name="Phelps K."/>
            <person name="Phillimore B.J."/>
            <person name="Plumb R."/>
            <person name="Rajan J."/>
            <person name="Raymond C."/>
            <person name="Rouse G."/>
            <person name="Saenphimmachak C."/>
            <person name="Sehra H.K."/>
            <person name="Sheridan E."/>
            <person name="Shownkeen R."/>
            <person name="Sims S."/>
            <person name="Skuce C.D."/>
            <person name="Smith M."/>
            <person name="Steward C."/>
            <person name="Subramanian S."/>
            <person name="Sycamore N."/>
            <person name="Tracey A."/>
            <person name="Tromans A."/>
            <person name="Van Helmond Z."/>
            <person name="Wall M."/>
            <person name="Wallis J.M."/>
            <person name="White S."/>
            <person name="Whitehead S.L."/>
            <person name="Wilkinson J.E."/>
            <person name="Willey D.L."/>
            <person name="Williams H."/>
            <person name="Wilming L."/>
            <person name="Wray P.W."/>
            <person name="Wu Z."/>
            <person name="Coulson A."/>
            <person name="Vaudin M."/>
            <person name="Sulston J.E."/>
            <person name="Durbin R.M."/>
            <person name="Hubbard T."/>
            <person name="Wooster R."/>
            <person name="Dunham I."/>
            <person name="Carter N.P."/>
            <person name="McVean G."/>
            <person name="Ross M.T."/>
            <person name="Harrow J."/>
            <person name="Olson M.V."/>
            <person name="Beck S."/>
            <person name="Rogers J."/>
            <person name="Bentley D.R."/>
        </authorList>
    </citation>
    <scope>NUCLEOTIDE SEQUENCE [LARGE SCALE GENOMIC DNA]</scope>
</reference>
<reference key="3">
    <citation type="submission" date="2005-09" db="EMBL/GenBank/DDBJ databases">
        <authorList>
            <person name="Mural R.J."/>
            <person name="Istrail S."/>
            <person name="Sutton G.G."/>
            <person name="Florea L."/>
            <person name="Halpern A.L."/>
            <person name="Mobarry C.M."/>
            <person name="Lippert R."/>
            <person name="Walenz B."/>
            <person name="Shatkay H."/>
            <person name="Dew I."/>
            <person name="Miller J.R."/>
            <person name="Flanigan M.J."/>
            <person name="Edwards N.J."/>
            <person name="Bolanos R."/>
            <person name="Fasulo D."/>
            <person name="Halldorsson B.V."/>
            <person name="Hannenhalli S."/>
            <person name="Turner R."/>
            <person name="Yooseph S."/>
            <person name="Lu F."/>
            <person name="Nusskern D.R."/>
            <person name="Shue B.C."/>
            <person name="Zheng X.H."/>
            <person name="Zhong F."/>
            <person name="Delcher A.L."/>
            <person name="Huson D.H."/>
            <person name="Kravitz S.A."/>
            <person name="Mouchard L."/>
            <person name="Reinert K."/>
            <person name="Remington K.A."/>
            <person name="Clark A.G."/>
            <person name="Waterman M.S."/>
            <person name="Eichler E.E."/>
            <person name="Adams M.D."/>
            <person name="Hunkapiller M.W."/>
            <person name="Myers E.W."/>
            <person name="Venter J.C."/>
        </authorList>
    </citation>
    <scope>NUCLEOTIDE SEQUENCE [LARGE SCALE GENOMIC DNA]</scope>
</reference>
<reference key="4">
    <citation type="journal article" date="1990" name="J. Exp. Med.">
        <title>Coding sequences of the tal-1 gene are disrupted by chromosome translocation in human T cell leukemia.</title>
        <authorList>
            <person name="Chen Q."/>
            <person name="Yang C.Y.C."/>
            <person name="Tsan J.T."/>
            <person name="Xia Y."/>
            <person name="Ragab A.H."/>
            <person name="Peiper S.C."/>
            <person name="Carroll A."/>
            <person name="Baer R."/>
        </authorList>
    </citation>
    <scope>NUCLEOTIDE SEQUENCE [GENOMIC DNA] OF 106-148</scope>
</reference>
<reference key="5">
    <citation type="journal article" date="1989" name="Proc. Natl. Acad. Sci. U.S.A.">
        <title>The gene SCL is expressed during early hematopoiesis and encodes a differentiation-related DNA-binding motif.</title>
        <authorList>
            <person name="Begley C.G."/>
            <person name="Aplan P.D."/>
            <person name="Denning S.M."/>
            <person name="Haynes B.F."/>
            <person name="Waldmann T.A."/>
            <person name="Kirsch I.R."/>
        </authorList>
    </citation>
    <scope>NUCLEOTIDE SEQUENCE [MRNA] OF 118-331</scope>
    <source>
        <tissue>Bone marrow</tissue>
    </source>
</reference>
<reference key="6">
    <citation type="journal article" date="1990" name="EMBO J.">
        <title>The tal gene undergoes chromosome translocation in T cell leukemia and potentially encodes a helix-loop-helix protein.</title>
        <authorList>
            <person name="Chen Q."/>
            <person name="Cheng J.-T."/>
            <person name="Tsai L.H."/>
            <person name="Schneider N."/>
            <person name="Buchanan G."/>
            <person name="Carroll A."/>
            <person name="Crist W."/>
            <person name="Ozanne B."/>
            <person name="Siciliano M.J."/>
            <person name="Baer R."/>
        </authorList>
    </citation>
    <scope>NUCLEOTIDE SEQUENCE [MRNA] OF 181-331</scope>
    <scope>CHROMOSOMAL TRANSLOCATION</scope>
</reference>
<reference key="7">
    <citation type="journal article" date="1992" name="EMBO J.">
        <title>The SCL gene product: a positive regulator of erythroid differentiation.</title>
        <authorList>
            <person name="Aplan P.D."/>
            <person name="Nakahara K."/>
            <person name="Orkin S.H."/>
            <person name="Kirsch I.R."/>
        </authorList>
    </citation>
    <scope>FUNCTION</scope>
</reference>
<reference key="8">
    <citation type="journal article" date="1993" name="Oncogene">
        <title>Products of the TAL1 oncogene: basic helix-loop-helix proteins phosphorylated at serine residues.</title>
        <authorList>
            <person name="Cheng J.-T."/>
            <person name="Hsu H.-L."/>
            <person name="Hwang L.-Y."/>
            <person name="Baer R."/>
        </authorList>
    </citation>
    <scope>PHOSPHORYLATION</scope>
</reference>
<reference key="9">
    <citation type="journal article" date="2009" name="Sci. Signal.">
        <title>Quantitative phosphoproteomic analysis of T cell receptor signaling reveals system-wide modulation of protein-protein interactions.</title>
        <authorList>
            <person name="Mayya V."/>
            <person name="Lundgren D.H."/>
            <person name="Hwang S.-I."/>
            <person name="Rezaul K."/>
            <person name="Wu L."/>
            <person name="Eng J.K."/>
            <person name="Rodionov V."/>
            <person name="Han D.K."/>
        </authorList>
    </citation>
    <scope>PHOSPHORYLATION [LARGE SCALE ANALYSIS] AT SER-122</scope>
    <scope>IDENTIFICATION BY MASS SPECTROMETRY [LARGE SCALE ANALYSIS]</scope>
    <source>
        <tissue>Leukemic T-cell</tissue>
    </source>
</reference>
<reference key="10">
    <citation type="journal article" date="2013" name="J. Proteome Res.">
        <title>Toward a comprehensive characterization of a human cancer cell phosphoproteome.</title>
        <authorList>
            <person name="Zhou H."/>
            <person name="Di Palma S."/>
            <person name="Preisinger C."/>
            <person name="Peng M."/>
            <person name="Polat A.N."/>
            <person name="Heck A.J."/>
            <person name="Mohammed S."/>
        </authorList>
    </citation>
    <scope>PHOSPHORYLATION [LARGE SCALE ANALYSIS] AT SER-12 AND SER-122</scope>
    <scope>IDENTIFICATION BY MASS SPECTROMETRY [LARGE SCALE ANALYSIS]</scope>
    <source>
        <tissue>Erythroleukemia</tissue>
    </source>
</reference>
<protein>
    <recommendedName>
        <fullName>T-cell acute lymphocytic leukemia protein 1</fullName>
        <shortName>TAL-1</shortName>
    </recommendedName>
    <alternativeName>
        <fullName>Class A basic helix-loop-helix protein 17</fullName>
        <shortName>bHLHa17</shortName>
    </alternativeName>
    <alternativeName>
        <fullName>Stem cell protein</fullName>
    </alternativeName>
    <alternativeName>
        <fullName>T-cell leukemia/lymphoma protein 5</fullName>
    </alternativeName>
</protein>
<gene>
    <name type="primary">TAL1</name>
    <name type="synonym">BHLHA17</name>
    <name type="synonym">SCL</name>
    <name type="synonym">TCL5</name>
</gene>
<comment type="function">
    <text evidence="1 5">Implicated in the genesis of hemopoietic malignancies. It may play an important role in hemopoietic differentiation. Serves as a positive regulator of erythroid differentiation (By similarity).</text>
</comment>
<comment type="subunit">
    <text evidence="2">Efficient DNA binding requires dimerization with another bHLH protein. Forms heterodimers with TCF3. Binds to the LIM domain containing protein LMO2 and to DRG1. Can assemble in a complex with LDB1 and LMO2. Component of a TAL-1 complex composed at least of CBFA2T3, LDB1, TAL1 and TCF3. Interacts with SBNO2; this interaction inhibits TAL1 occupancy of the DCSTAMP promoter, leading to the activation of the DCSTAMP promoter by the transcription factor MITF.</text>
</comment>
<comment type="interaction">
    <interactant intactId="EBI-1753878">
        <id>P17542</id>
    </interactant>
    <interactant intactId="EBI-913209">
        <id>P14921</id>
        <label>ETS1</label>
    </interactant>
    <organismsDiffer>false</organismsDiffer>
    <experiments>2</experiments>
</comment>
<comment type="interaction">
    <interactant intactId="EBI-1753878">
        <id>P17542</id>
    </interactant>
    <interactant intactId="EBI-15599570">
        <id>O60341-1</id>
        <label>KDM1A</label>
    </interactant>
    <organismsDiffer>false</organismsDiffer>
    <experiments>5</experiments>
</comment>
<comment type="interaction">
    <interactant intactId="EBI-1753878">
        <id>P17542</id>
    </interactant>
    <interactant intactId="EBI-298355">
        <id>P10242</id>
        <label>MYB</label>
    </interactant>
    <organismsDiffer>false</organismsDiffer>
    <experiments>2</experiments>
</comment>
<comment type="interaction">
    <interactant intactId="EBI-1753878">
        <id>P17542</id>
    </interactant>
    <interactant intactId="EBI-925904">
        <id>Q01196</id>
        <label>RUNX1</label>
    </interactant>
    <organismsDiffer>false</organismsDiffer>
    <experiments>3</experiments>
</comment>
<comment type="interaction">
    <interactant intactId="EBI-1753878">
        <id>P17542</id>
    </interactant>
    <interactant intactId="EBI-722877">
        <id>Q99081</id>
        <label>TCF12</label>
    </interactant>
    <organismsDiffer>false</organismsDiffer>
    <experiments>7</experiments>
</comment>
<comment type="interaction">
    <interactant intactId="EBI-1753878">
        <id>P17542</id>
    </interactant>
    <interactant intactId="EBI-769630">
        <id>P15923</id>
        <label>TCF3</label>
    </interactant>
    <organismsDiffer>false</organismsDiffer>
    <experiments>10</experiments>
</comment>
<comment type="interaction">
    <interactant intactId="EBI-1753878">
        <id>P17542</id>
    </interactant>
    <interactant intactId="EBI-533224">
        <id>P15884</id>
        <label>TCF4</label>
    </interactant>
    <organismsDiffer>false</organismsDiffer>
    <experiments>5</experiments>
</comment>
<comment type="interaction">
    <interactant intactId="EBI-1753878">
        <id>P17542</id>
    </interactant>
    <interactant intactId="EBI-3903256">
        <id>P25801</id>
        <label>Lmo2</label>
    </interactant>
    <organismsDiffer>true</organismsDiffer>
    <experiments>5</experiments>
</comment>
<comment type="subcellular location">
    <subcellularLocation>
        <location evidence="3">Nucleus</location>
    </subcellularLocation>
</comment>
<comment type="alternative products">
    <event type="alternative splicing"/>
    <isoform>
        <id>P17542-1</id>
        <name>PP42-TAL1</name>
        <sequence type="displayed"/>
    </isoform>
    <isoform>
        <id>P17542-2</id>
        <name>PP39-TAL1</name>
        <sequence type="described" ref="VSP_002153"/>
    </isoform>
    <isoform>
        <id>P17542-3</id>
        <name>PP22-TAL1</name>
        <sequence type="described" ref="VSP_002154"/>
    </isoform>
    <text>The splicing pattern is cell-lineage dependent.</text>
</comment>
<comment type="tissue specificity">
    <text>Leukemic stem cell.</text>
</comment>
<comment type="domain">
    <text>The helix-loop-helix domain is necessary and sufficient for the interaction with DRG1.</text>
</comment>
<comment type="PTM">
    <text evidence="1">Phosphorylated on serine residues. Phosphorylation of Ser-122 is strongly stimulated by hypoxia (By similarity).</text>
</comment>
<comment type="PTM">
    <text evidence="1">Ubiquitinated; subsequent to hypoxia-dependent phosphorylation of Ser-122, ubiquitination targets the protein for rapid degradation via the ubiquitin system. This process may be characteristic for microvascular endothelial cells, since it could not be observed in large vessel endothelial cells (By similarity).</text>
</comment>
<comment type="disease">
    <text evidence="6">A chromosomal aberration involving TAL1 may be a cause of some T-cell acute lymphoblastic leukemias (T-ALL). Translocation t(1;14)(p32;q11) with T-cell receptor alpha chain (TCRA) genes.</text>
</comment>
<comment type="online information" name="Atlas of Genetics and Cytogenetics in Oncology and Haematology">
    <link uri="https://atlasgeneticsoncology.org/gene/15/TAL1"/>
</comment>
<sequence length="331" mass="34271">MTERPPSEAARSDPQLEGRDAAEASMAPPHLVLLNGVAKETSRAAAAEPPVIELGARGGPGGGPAGGGGAARDLKGRDAATAEARHRVPTTELCRPPGPAPAPAPASVTAELPGDGRMVQLSPPALAAPAAPGRALLYSLSQPLASLGSGFFGEPDAFPMFTTNNRVKRRPSPYEMEITDGPHTKVVRRIFTNSRERWRQQNVNGAFAELRKLIPTHPPDKKLSKNEILRLAMKYINFLAKLLNDQEEEGTQRAKTGKDPVVGAGGGGGGGGGGAPPDDLLQDVLSPNSSCGSSLDGAASPDSYTEEPAPKHTARSLHPAMLPAADGAGPR</sequence>
<name>TAL1_HUMAN</name>
<organism>
    <name type="scientific">Homo sapiens</name>
    <name type="common">Human</name>
    <dbReference type="NCBI Taxonomy" id="9606"/>
    <lineage>
        <taxon>Eukaryota</taxon>
        <taxon>Metazoa</taxon>
        <taxon>Chordata</taxon>
        <taxon>Craniata</taxon>
        <taxon>Vertebrata</taxon>
        <taxon>Euteleostomi</taxon>
        <taxon>Mammalia</taxon>
        <taxon>Eutheria</taxon>
        <taxon>Euarchontoglires</taxon>
        <taxon>Primates</taxon>
        <taxon>Haplorrhini</taxon>
        <taxon>Catarrhini</taxon>
        <taxon>Hominidae</taxon>
        <taxon>Homo</taxon>
    </lineage>
</organism>
<proteinExistence type="evidence at protein level"/>
<keyword id="KW-0002">3D-structure</keyword>
<keyword id="KW-0025">Alternative splicing</keyword>
<keyword id="KW-0160">Chromosomal rearrangement</keyword>
<keyword id="KW-0217">Developmental protein</keyword>
<keyword id="KW-0221">Differentiation</keyword>
<keyword id="KW-0238">DNA-binding</keyword>
<keyword id="KW-0539">Nucleus</keyword>
<keyword id="KW-0597">Phosphoprotein</keyword>
<keyword id="KW-1267">Proteomics identification</keyword>
<keyword id="KW-0656">Proto-oncogene</keyword>
<keyword id="KW-1185">Reference proteome</keyword>
<keyword id="KW-0804">Transcription</keyword>
<keyword id="KW-0805">Transcription regulation</keyword>
<keyword id="KW-0832">Ubl conjugation</keyword>
<evidence type="ECO:0000250" key="1"/>
<evidence type="ECO:0000250" key="2">
    <source>
        <dbReference type="UniProtKB" id="P22091"/>
    </source>
</evidence>
<evidence type="ECO:0000255" key="3">
    <source>
        <dbReference type="PROSITE-ProRule" id="PRU00981"/>
    </source>
</evidence>
<evidence type="ECO:0000256" key="4">
    <source>
        <dbReference type="SAM" id="MobiDB-lite"/>
    </source>
</evidence>
<evidence type="ECO:0000269" key="5">
    <source>
    </source>
</evidence>
<evidence type="ECO:0000269" key="6">
    <source>
    </source>
</evidence>
<evidence type="ECO:0000305" key="7"/>
<evidence type="ECO:0007744" key="8">
    <source>
    </source>
</evidence>
<evidence type="ECO:0007744" key="9">
    <source>
    </source>
</evidence>
<evidence type="ECO:0007829" key="10">
    <source>
        <dbReference type="PDB" id="2YPA"/>
    </source>
</evidence>
<accession>P17542</accession>
<accession>D3DQ24</accession>